<name>SYH_SHEPW</name>
<comment type="catalytic activity">
    <reaction evidence="1">
        <text>tRNA(His) + L-histidine + ATP = L-histidyl-tRNA(His) + AMP + diphosphate + H(+)</text>
        <dbReference type="Rhea" id="RHEA:17313"/>
        <dbReference type="Rhea" id="RHEA-COMP:9665"/>
        <dbReference type="Rhea" id="RHEA-COMP:9689"/>
        <dbReference type="ChEBI" id="CHEBI:15378"/>
        <dbReference type="ChEBI" id="CHEBI:30616"/>
        <dbReference type="ChEBI" id="CHEBI:33019"/>
        <dbReference type="ChEBI" id="CHEBI:57595"/>
        <dbReference type="ChEBI" id="CHEBI:78442"/>
        <dbReference type="ChEBI" id="CHEBI:78527"/>
        <dbReference type="ChEBI" id="CHEBI:456215"/>
        <dbReference type="EC" id="6.1.1.21"/>
    </reaction>
</comment>
<comment type="subunit">
    <text evidence="1">Homodimer.</text>
</comment>
<comment type="subcellular location">
    <subcellularLocation>
        <location evidence="1">Cytoplasm</location>
    </subcellularLocation>
</comment>
<comment type="similarity">
    <text evidence="1">Belongs to the class-II aminoacyl-tRNA synthetase family.</text>
</comment>
<dbReference type="EC" id="6.1.1.21" evidence="1"/>
<dbReference type="EMBL" id="CP000472">
    <property type="protein sequence ID" value="ACJ28238.1"/>
    <property type="molecule type" value="Genomic_DNA"/>
</dbReference>
<dbReference type="RefSeq" id="WP_020911616.1">
    <property type="nucleotide sequence ID" value="NC_011566.1"/>
</dbReference>
<dbReference type="SMR" id="B8CKR2"/>
<dbReference type="STRING" id="225849.swp_1452"/>
<dbReference type="KEGG" id="swp:swp_1452"/>
<dbReference type="eggNOG" id="COG0124">
    <property type="taxonomic scope" value="Bacteria"/>
</dbReference>
<dbReference type="HOGENOM" id="CLU_025113_1_0_6"/>
<dbReference type="OrthoDB" id="9800814at2"/>
<dbReference type="Proteomes" id="UP000000753">
    <property type="component" value="Chromosome"/>
</dbReference>
<dbReference type="GO" id="GO:0005737">
    <property type="term" value="C:cytoplasm"/>
    <property type="evidence" value="ECO:0007669"/>
    <property type="project" value="UniProtKB-SubCell"/>
</dbReference>
<dbReference type="GO" id="GO:0005524">
    <property type="term" value="F:ATP binding"/>
    <property type="evidence" value="ECO:0007669"/>
    <property type="project" value="UniProtKB-UniRule"/>
</dbReference>
<dbReference type="GO" id="GO:0004821">
    <property type="term" value="F:histidine-tRNA ligase activity"/>
    <property type="evidence" value="ECO:0007669"/>
    <property type="project" value="UniProtKB-UniRule"/>
</dbReference>
<dbReference type="GO" id="GO:0006427">
    <property type="term" value="P:histidyl-tRNA aminoacylation"/>
    <property type="evidence" value="ECO:0007669"/>
    <property type="project" value="UniProtKB-UniRule"/>
</dbReference>
<dbReference type="CDD" id="cd00773">
    <property type="entry name" value="HisRS-like_core"/>
    <property type="match status" value="1"/>
</dbReference>
<dbReference type="CDD" id="cd00859">
    <property type="entry name" value="HisRS_anticodon"/>
    <property type="match status" value="1"/>
</dbReference>
<dbReference type="FunFam" id="3.30.930.10:FF:000005">
    <property type="entry name" value="Histidine--tRNA ligase"/>
    <property type="match status" value="1"/>
</dbReference>
<dbReference type="Gene3D" id="3.40.50.800">
    <property type="entry name" value="Anticodon-binding domain"/>
    <property type="match status" value="1"/>
</dbReference>
<dbReference type="Gene3D" id="3.30.930.10">
    <property type="entry name" value="Bira Bifunctional Protein, Domain 2"/>
    <property type="match status" value="1"/>
</dbReference>
<dbReference type="HAMAP" id="MF_00127">
    <property type="entry name" value="His_tRNA_synth"/>
    <property type="match status" value="1"/>
</dbReference>
<dbReference type="InterPro" id="IPR006195">
    <property type="entry name" value="aa-tRNA-synth_II"/>
</dbReference>
<dbReference type="InterPro" id="IPR045864">
    <property type="entry name" value="aa-tRNA-synth_II/BPL/LPL"/>
</dbReference>
<dbReference type="InterPro" id="IPR004154">
    <property type="entry name" value="Anticodon-bd"/>
</dbReference>
<dbReference type="InterPro" id="IPR036621">
    <property type="entry name" value="Anticodon-bd_dom_sf"/>
</dbReference>
<dbReference type="InterPro" id="IPR015807">
    <property type="entry name" value="His-tRNA-ligase"/>
</dbReference>
<dbReference type="InterPro" id="IPR041715">
    <property type="entry name" value="HisRS-like_core"/>
</dbReference>
<dbReference type="InterPro" id="IPR004516">
    <property type="entry name" value="HisRS/HisZ"/>
</dbReference>
<dbReference type="InterPro" id="IPR033656">
    <property type="entry name" value="HisRS_anticodon"/>
</dbReference>
<dbReference type="NCBIfam" id="TIGR00442">
    <property type="entry name" value="hisS"/>
    <property type="match status" value="1"/>
</dbReference>
<dbReference type="PANTHER" id="PTHR43707:SF1">
    <property type="entry name" value="HISTIDINE--TRNA LIGASE, MITOCHONDRIAL-RELATED"/>
    <property type="match status" value="1"/>
</dbReference>
<dbReference type="PANTHER" id="PTHR43707">
    <property type="entry name" value="HISTIDYL-TRNA SYNTHETASE"/>
    <property type="match status" value="1"/>
</dbReference>
<dbReference type="Pfam" id="PF03129">
    <property type="entry name" value="HGTP_anticodon"/>
    <property type="match status" value="1"/>
</dbReference>
<dbReference type="Pfam" id="PF13393">
    <property type="entry name" value="tRNA-synt_His"/>
    <property type="match status" value="1"/>
</dbReference>
<dbReference type="PIRSF" id="PIRSF001549">
    <property type="entry name" value="His-tRNA_synth"/>
    <property type="match status" value="1"/>
</dbReference>
<dbReference type="SUPFAM" id="SSF52954">
    <property type="entry name" value="Class II aaRS ABD-related"/>
    <property type="match status" value="1"/>
</dbReference>
<dbReference type="SUPFAM" id="SSF55681">
    <property type="entry name" value="Class II aaRS and biotin synthetases"/>
    <property type="match status" value="1"/>
</dbReference>
<dbReference type="PROSITE" id="PS50862">
    <property type="entry name" value="AA_TRNA_LIGASE_II"/>
    <property type="match status" value="1"/>
</dbReference>
<proteinExistence type="inferred from homology"/>
<sequence length="424" mass="47326">MAKQIQAIRGMNDILPTQSPIWQKLETVLRETVSAYGYSEIRTPIVESTDLFKRSIGEVTDIVEKEMYTFDDRNGDSLTLRPEGTASTVRAGNEHGLLYNQEQRLWYMGPMFRHERPQKGRYRQFHQFGVEVYGIPSADIDAEVLMLSAMLWEKLGITEHVTLELNTLGDSEERAAYRDALIAFLEQHKDVLDEDSQRRMYSNPLRVLDSKNAAVQALLADAPALMDYLGEETRSHFSHLCELLEAVGIQYTINPRLVRGLDYYNRTVFEWVTSSLGSQGTVLAGGRYDGLVGQLGGKSTPAVGFAMGLERIVLLLQTLELDKDIKPAVDVYVTAMGDSCRVEAIKVAQDLRASLPNLKVMSHCGGGNFKKQMKRADKSGAAVALVIGEDELANNQVAVKYLREDKAQELVARDALATYIAELV</sequence>
<feature type="chain" id="PRO_1000199151" description="Histidine--tRNA ligase">
    <location>
        <begin position="1"/>
        <end position="424"/>
    </location>
</feature>
<protein>
    <recommendedName>
        <fullName evidence="1">Histidine--tRNA ligase</fullName>
        <ecNumber evidence="1">6.1.1.21</ecNumber>
    </recommendedName>
    <alternativeName>
        <fullName evidence="1">Histidyl-tRNA synthetase</fullName>
        <shortName evidence="1">HisRS</shortName>
    </alternativeName>
</protein>
<keyword id="KW-0030">Aminoacyl-tRNA synthetase</keyword>
<keyword id="KW-0067">ATP-binding</keyword>
<keyword id="KW-0963">Cytoplasm</keyword>
<keyword id="KW-0436">Ligase</keyword>
<keyword id="KW-0547">Nucleotide-binding</keyword>
<keyword id="KW-0648">Protein biosynthesis</keyword>
<organism>
    <name type="scientific">Shewanella piezotolerans (strain WP3 / JCM 13877)</name>
    <dbReference type="NCBI Taxonomy" id="225849"/>
    <lineage>
        <taxon>Bacteria</taxon>
        <taxon>Pseudomonadati</taxon>
        <taxon>Pseudomonadota</taxon>
        <taxon>Gammaproteobacteria</taxon>
        <taxon>Alteromonadales</taxon>
        <taxon>Shewanellaceae</taxon>
        <taxon>Shewanella</taxon>
    </lineage>
</organism>
<accession>B8CKR2</accession>
<reference key="1">
    <citation type="journal article" date="2008" name="PLoS ONE">
        <title>Environmental adaptation: genomic analysis of the piezotolerant and psychrotolerant deep-sea iron reducing bacterium Shewanella piezotolerans WP3.</title>
        <authorList>
            <person name="Wang F."/>
            <person name="Wang J."/>
            <person name="Jian H."/>
            <person name="Zhang B."/>
            <person name="Li S."/>
            <person name="Wang F."/>
            <person name="Zeng X."/>
            <person name="Gao L."/>
            <person name="Bartlett D.H."/>
            <person name="Yu J."/>
            <person name="Hu S."/>
            <person name="Xiao X."/>
        </authorList>
    </citation>
    <scope>NUCLEOTIDE SEQUENCE [LARGE SCALE GENOMIC DNA]</scope>
    <source>
        <strain>WP3 / JCM 13877</strain>
    </source>
</reference>
<evidence type="ECO:0000255" key="1">
    <source>
        <dbReference type="HAMAP-Rule" id="MF_00127"/>
    </source>
</evidence>
<gene>
    <name evidence="1" type="primary">hisS</name>
    <name type="ordered locus">swp_1452</name>
</gene>